<reference key="1">
    <citation type="journal article" date="2009" name="PLoS Genet.">
        <title>Organised genome dynamics in the Escherichia coli species results in highly diverse adaptive paths.</title>
        <authorList>
            <person name="Touchon M."/>
            <person name="Hoede C."/>
            <person name="Tenaillon O."/>
            <person name="Barbe V."/>
            <person name="Baeriswyl S."/>
            <person name="Bidet P."/>
            <person name="Bingen E."/>
            <person name="Bonacorsi S."/>
            <person name="Bouchier C."/>
            <person name="Bouvet O."/>
            <person name="Calteau A."/>
            <person name="Chiapello H."/>
            <person name="Clermont O."/>
            <person name="Cruveiller S."/>
            <person name="Danchin A."/>
            <person name="Diard M."/>
            <person name="Dossat C."/>
            <person name="Karoui M.E."/>
            <person name="Frapy E."/>
            <person name="Garry L."/>
            <person name="Ghigo J.M."/>
            <person name="Gilles A.M."/>
            <person name="Johnson J."/>
            <person name="Le Bouguenec C."/>
            <person name="Lescat M."/>
            <person name="Mangenot S."/>
            <person name="Martinez-Jehanne V."/>
            <person name="Matic I."/>
            <person name="Nassif X."/>
            <person name="Oztas S."/>
            <person name="Petit M.A."/>
            <person name="Pichon C."/>
            <person name="Rouy Z."/>
            <person name="Ruf C.S."/>
            <person name="Schneider D."/>
            <person name="Tourret J."/>
            <person name="Vacherie B."/>
            <person name="Vallenet D."/>
            <person name="Medigue C."/>
            <person name="Rocha E.P.C."/>
            <person name="Denamur E."/>
        </authorList>
    </citation>
    <scope>NUCLEOTIDE SEQUENCE [LARGE SCALE GENOMIC DNA]</scope>
    <source>
        <strain>IAI1</strain>
    </source>
</reference>
<dbReference type="EC" id="4.1.1.49" evidence="1"/>
<dbReference type="EMBL" id="CU928160">
    <property type="protein sequence ID" value="CAR00344.1"/>
    <property type="molecule type" value="Genomic_DNA"/>
</dbReference>
<dbReference type="RefSeq" id="WP_001265681.1">
    <property type="nucleotide sequence ID" value="NC_011741.1"/>
</dbReference>
<dbReference type="SMR" id="B7M1V7"/>
<dbReference type="KEGG" id="ecr:ECIAI1_3544"/>
<dbReference type="HOGENOM" id="CLU_018247_0_1_6"/>
<dbReference type="UniPathway" id="UPA00138"/>
<dbReference type="GO" id="GO:0005829">
    <property type="term" value="C:cytosol"/>
    <property type="evidence" value="ECO:0007669"/>
    <property type="project" value="TreeGrafter"/>
</dbReference>
<dbReference type="GO" id="GO:0005524">
    <property type="term" value="F:ATP binding"/>
    <property type="evidence" value="ECO:0007669"/>
    <property type="project" value="UniProtKB-UniRule"/>
</dbReference>
<dbReference type="GO" id="GO:0046872">
    <property type="term" value="F:metal ion binding"/>
    <property type="evidence" value="ECO:0007669"/>
    <property type="project" value="UniProtKB-KW"/>
</dbReference>
<dbReference type="GO" id="GO:0004612">
    <property type="term" value="F:phosphoenolpyruvate carboxykinase (ATP) activity"/>
    <property type="evidence" value="ECO:0007669"/>
    <property type="project" value="UniProtKB-UniRule"/>
</dbReference>
<dbReference type="GO" id="GO:0006094">
    <property type="term" value="P:gluconeogenesis"/>
    <property type="evidence" value="ECO:0007669"/>
    <property type="project" value="UniProtKB-UniRule"/>
</dbReference>
<dbReference type="CDD" id="cd00484">
    <property type="entry name" value="PEPCK_ATP"/>
    <property type="match status" value="1"/>
</dbReference>
<dbReference type="FunFam" id="2.170.8.10:FF:000001">
    <property type="entry name" value="Phosphoenolpyruvate carboxykinase (ATP)"/>
    <property type="match status" value="1"/>
</dbReference>
<dbReference type="FunFam" id="3.40.449.10:FF:000001">
    <property type="entry name" value="Phosphoenolpyruvate carboxykinase (ATP)"/>
    <property type="match status" value="1"/>
</dbReference>
<dbReference type="Gene3D" id="3.90.228.20">
    <property type="match status" value="1"/>
</dbReference>
<dbReference type="Gene3D" id="3.40.449.10">
    <property type="entry name" value="Phosphoenolpyruvate Carboxykinase, domain 1"/>
    <property type="match status" value="1"/>
</dbReference>
<dbReference type="Gene3D" id="2.170.8.10">
    <property type="entry name" value="Phosphoenolpyruvate Carboxykinase, domain 2"/>
    <property type="match status" value="1"/>
</dbReference>
<dbReference type="HAMAP" id="MF_00453">
    <property type="entry name" value="PEPCK_ATP"/>
    <property type="match status" value="1"/>
</dbReference>
<dbReference type="InterPro" id="IPR001272">
    <property type="entry name" value="PEP_carboxykinase_ATP"/>
</dbReference>
<dbReference type="InterPro" id="IPR013035">
    <property type="entry name" value="PEP_carboxykinase_C"/>
</dbReference>
<dbReference type="InterPro" id="IPR008210">
    <property type="entry name" value="PEP_carboxykinase_N"/>
</dbReference>
<dbReference type="InterPro" id="IPR015994">
    <property type="entry name" value="PEPCK_ATP_CS"/>
</dbReference>
<dbReference type="NCBIfam" id="TIGR00224">
    <property type="entry name" value="pckA"/>
    <property type="match status" value="1"/>
</dbReference>
<dbReference type="NCBIfam" id="NF006819">
    <property type="entry name" value="PRK09344.1-1"/>
    <property type="match status" value="1"/>
</dbReference>
<dbReference type="NCBIfam" id="NF006820">
    <property type="entry name" value="PRK09344.1-2"/>
    <property type="match status" value="1"/>
</dbReference>
<dbReference type="NCBIfam" id="NF006821">
    <property type="entry name" value="PRK09344.1-3"/>
    <property type="match status" value="1"/>
</dbReference>
<dbReference type="PANTHER" id="PTHR30031:SF0">
    <property type="entry name" value="PHOSPHOENOLPYRUVATE CARBOXYKINASE (ATP)"/>
    <property type="match status" value="1"/>
</dbReference>
<dbReference type="PANTHER" id="PTHR30031">
    <property type="entry name" value="PHOSPHOENOLPYRUVATE CARBOXYKINASE ATP"/>
    <property type="match status" value="1"/>
</dbReference>
<dbReference type="Pfam" id="PF01293">
    <property type="entry name" value="PEPCK_ATP"/>
    <property type="match status" value="1"/>
</dbReference>
<dbReference type="PIRSF" id="PIRSF006294">
    <property type="entry name" value="PEP_crbxkin"/>
    <property type="match status" value="1"/>
</dbReference>
<dbReference type="SUPFAM" id="SSF68923">
    <property type="entry name" value="PEP carboxykinase N-terminal domain"/>
    <property type="match status" value="1"/>
</dbReference>
<dbReference type="SUPFAM" id="SSF53795">
    <property type="entry name" value="PEP carboxykinase-like"/>
    <property type="match status" value="1"/>
</dbReference>
<dbReference type="PROSITE" id="PS00532">
    <property type="entry name" value="PEPCK_ATP"/>
    <property type="match status" value="1"/>
</dbReference>
<sequence length="540" mass="59643">MRVNNGLTPQELEAYGISDVHDIVYNPSYDLLYQEELDPSLTGYERGVLTNLGAVAVDTGIFTGRSPKDKYIVRDDTTRDTFWWADKGKGKNDNKPLSPETWQHLKGLVTRQLSGKRLFVVDAFCGANPDTRLSVRFITEVAWQAHFVKNMFIRPSDEELAGFKPDFIVMNGAKCTNPQWKEQGLNSENFVAFNLTERMQLIGGTWYGGEMKKGMFSMMNYLLPLKGIASMHCSANVGEKGDVAVFFGLSGTGKTTLSTDPKRRLIGDDEHGWDDDGVFNFEGGCYAKTIKLSKEAEPEIYNAIRRDALLENVTVREDGTIDFDDGSKTENTRVSYPIYHIDNIVKPVSKAGHATKVIFLTADAFGVLPPVSRLTADQTQYHFLSGFTAKLAGTERGITEPTPTFSACFGAAFLSLHPTQYAEVLVKRMQAAGAQAYLVNTGWNGTGKRISIKDTRAIIDAILNGSLDNAETFTLPMFNLAIPTELPGVDTKILDPRNTYASPEQWQEKAETLAKLFIDNFDKYTDTPAGAALVAAGPKL</sequence>
<evidence type="ECO:0000255" key="1">
    <source>
        <dbReference type="HAMAP-Rule" id="MF_00453"/>
    </source>
</evidence>
<protein>
    <recommendedName>
        <fullName evidence="1">Phosphoenolpyruvate carboxykinase (ATP)</fullName>
        <shortName evidence="1">PCK</shortName>
        <shortName evidence="1">PEP carboxykinase</shortName>
        <shortName evidence="1">PEPCK</shortName>
        <ecNumber evidence="1">4.1.1.49</ecNumber>
    </recommendedName>
</protein>
<name>PCKA_ECO8A</name>
<organism>
    <name type="scientific">Escherichia coli O8 (strain IAI1)</name>
    <dbReference type="NCBI Taxonomy" id="585034"/>
    <lineage>
        <taxon>Bacteria</taxon>
        <taxon>Pseudomonadati</taxon>
        <taxon>Pseudomonadota</taxon>
        <taxon>Gammaproteobacteria</taxon>
        <taxon>Enterobacterales</taxon>
        <taxon>Enterobacteriaceae</taxon>
        <taxon>Escherichia</taxon>
    </lineage>
</organism>
<proteinExistence type="inferred from homology"/>
<gene>
    <name evidence="1" type="primary">pckA</name>
    <name type="ordered locus">ECIAI1_3544</name>
</gene>
<accession>B7M1V7</accession>
<keyword id="KW-0007">Acetylation</keyword>
<keyword id="KW-0067">ATP-binding</keyword>
<keyword id="KW-0963">Cytoplasm</keyword>
<keyword id="KW-0210">Decarboxylase</keyword>
<keyword id="KW-0312">Gluconeogenesis</keyword>
<keyword id="KW-0456">Lyase</keyword>
<keyword id="KW-0464">Manganese</keyword>
<keyword id="KW-0479">Metal-binding</keyword>
<keyword id="KW-0547">Nucleotide-binding</keyword>
<comment type="function">
    <text evidence="1">Involved in the gluconeogenesis. Catalyzes the conversion of oxaloacetate (OAA) to phosphoenolpyruvate (PEP) through direct phosphoryl transfer between the nucleoside triphosphate and OAA.</text>
</comment>
<comment type="catalytic activity">
    <reaction evidence="1">
        <text>oxaloacetate + ATP = phosphoenolpyruvate + ADP + CO2</text>
        <dbReference type="Rhea" id="RHEA:18617"/>
        <dbReference type="ChEBI" id="CHEBI:16452"/>
        <dbReference type="ChEBI" id="CHEBI:16526"/>
        <dbReference type="ChEBI" id="CHEBI:30616"/>
        <dbReference type="ChEBI" id="CHEBI:58702"/>
        <dbReference type="ChEBI" id="CHEBI:456216"/>
        <dbReference type="EC" id="4.1.1.49"/>
    </reaction>
</comment>
<comment type="cofactor">
    <cofactor evidence="1">
        <name>Mn(2+)</name>
        <dbReference type="ChEBI" id="CHEBI:29035"/>
    </cofactor>
    <text evidence="1">Binds 1 Mn(2+) ion per subunit.</text>
</comment>
<comment type="pathway">
    <text evidence="1">Carbohydrate biosynthesis; gluconeogenesis.</text>
</comment>
<comment type="subunit">
    <text evidence="1">Monomer.</text>
</comment>
<comment type="subcellular location">
    <subcellularLocation>
        <location evidence="1">Cytoplasm</location>
    </subcellularLocation>
</comment>
<comment type="similarity">
    <text evidence="1">Belongs to the phosphoenolpyruvate carboxykinase (ATP) family.</text>
</comment>
<feature type="chain" id="PRO_1000125063" description="Phosphoenolpyruvate carboxykinase (ATP)">
    <location>
        <begin position="1"/>
        <end position="540"/>
    </location>
</feature>
<feature type="binding site" evidence="1">
    <location>
        <position position="65"/>
    </location>
    <ligand>
        <name>substrate</name>
    </ligand>
</feature>
<feature type="binding site" evidence="1">
    <location>
        <position position="207"/>
    </location>
    <ligand>
        <name>substrate</name>
    </ligand>
</feature>
<feature type="binding site" evidence="1">
    <location>
        <position position="213"/>
    </location>
    <ligand>
        <name>ATP</name>
        <dbReference type="ChEBI" id="CHEBI:30616"/>
    </ligand>
</feature>
<feature type="binding site" evidence="1">
    <location>
        <position position="213"/>
    </location>
    <ligand>
        <name>Mn(2+)</name>
        <dbReference type="ChEBI" id="CHEBI:29035"/>
    </ligand>
</feature>
<feature type="binding site" evidence="1">
    <location>
        <position position="213"/>
    </location>
    <ligand>
        <name>substrate</name>
    </ligand>
</feature>
<feature type="binding site" evidence="1">
    <location>
        <position position="232"/>
    </location>
    <ligand>
        <name>ATP</name>
        <dbReference type="ChEBI" id="CHEBI:30616"/>
    </ligand>
</feature>
<feature type="binding site" evidence="1">
    <location>
        <position position="232"/>
    </location>
    <ligand>
        <name>Mn(2+)</name>
        <dbReference type="ChEBI" id="CHEBI:29035"/>
    </ligand>
</feature>
<feature type="binding site" evidence="1">
    <location>
        <begin position="248"/>
        <end position="256"/>
    </location>
    <ligand>
        <name>ATP</name>
        <dbReference type="ChEBI" id="CHEBI:30616"/>
    </ligand>
</feature>
<feature type="binding site" evidence="1">
    <location>
        <position position="269"/>
    </location>
    <ligand>
        <name>Mn(2+)</name>
        <dbReference type="ChEBI" id="CHEBI:29035"/>
    </ligand>
</feature>
<feature type="binding site" evidence="1">
    <location>
        <position position="297"/>
    </location>
    <ligand>
        <name>ATP</name>
        <dbReference type="ChEBI" id="CHEBI:30616"/>
    </ligand>
</feature>
<feature type="binding site" evidence="1">
    <location>
        <position position="333"/>
    </location>
    <ligand>
        <name>ATP</name>
        <dbReference type="ChEBI" id="CHEBI:30616"/>
    </ligand>
</feature>
<feature type="binding site" evidence="1">
    <location>
        <position position="333"/>
    </location>
    <ligand>
        <name>substrate</name>
    </ligand>
</feature>
<feature type="binding site" evidence="1">
    <location>
        <begin position="449"/>
        <end position="450"/>
    </location>
    <ligand>
        <name>ATP</name>
        <dbReference type="ChEBI" id="CHEBI:30616"/>
    </ligand>
</feature>
<feature type="binding site" evidence="1">
    <location>
        <position position="455"/>
    </location>
    <ligand>
        <name>ATP</name>
        <dbReference type="ChEBI" id="CHEBI:30616"/>
    </ligand>
</feature>
<feature type="modified residue" description="N6-acetyllysine" evidence="1">
    <location>
        <position position="87"/>
    </location>
</feature>
<feature type="modified residue" description="N6-acetyllysine" evidence="1">
    <location>
        <position position="523"/>
    </location>
</feature>